<name>AOX_EMENI</name>
<accession>Q9P959</accession>
<accession>C8VLX8</accession>
<accession>Q5BBI1</accession>
<accession>Q8J1Z3</accession>
<sequence>MNSMSTTGPIRVAAIPKHYLQFTVRTYTRSMASAGLRYSNPPLVKKCYDQPTGKRFISSTPQSQIKDYFPPPDAPKIVEVKTAWAHPVYSEEEMRAVTVGHREAKNWSDWVALGSVRLLRWGMDLVTGYKHPAPGQEDIKKFQMTEKEWLRRFVFLESVAGVPGMVGGMLRHLRSLRRMKRDNGWIETLLEEAYNERMHLLTFLKMAEPGWFMRLMVLGAQGVFFNGFFLSYLISPRTCHRFVGYLEEEAVLTYTRAIKDLESGRLPHWEKLEAPEIAVKYWKMPEGNRTMKDLLLYVRADEAKHREVNHTLGNLKQAVDVNPFAVEWKDPSKPHPGKGIKHLKTTGWEREEVV</sequence>
<feature type="transit peptide" description="Mitochondrion" evidence="3">
    <location>
        <begin position="1"/>
        <end position="64"/>
    </location>
</feature>
<feature type="chain" id="PRO_0000001721" description="Alternative oxidase, mitochondrial">
    <location>
        <begin position="65"/>
        <end position="354"/>
    </location>
</feature>
<feature type="transmembrane region" description="Helical" evidence="3">
    <location>
        <begin position="153"/>
        <end position="173"/>
    </location>
</feature>
<feature type="transmembrane region" description="Helical" evidence="3">
    <location>
        <begin position="215"/>
        <end position="235"/>
    </location>
</feature>
<feature type="region of interest" description="Disordered" evidence="4">
    <location>
        <begin position="333"/>
        <end position="354"/>
    </location>
</feature>
<feature type="compositionally biased region" description="Basic residues" evidence="4">
    <location>
        <begin position="335"/>
        <end position="344"/>
    </location>
</feature>
<feature type="binding site" evidence="2">
    <location>
        <position position="157"/>
    </location>
    <ligand>
        <name>Fe cation</name>
        <dbReference type="ChEBI" id="CHEBI:24875"/>
        <label>1</label>
    </ligand>
</feature>
<feature type="binding site" evidence="2">
    <location>
        <position position="196"/>
    </location>
    <ligand>
        <name>Fe cation</name>
        <dbReference type="ChEBI" id="CHEBI:24875"/>
        <label>1</label>
    </ligand>
</feature>
<feature type="binding site" evidence="2">
    <location>
        <position position="196"/>
    </location>
    <ligand>
        <name>Fe cation</name>
        <dbReference type="ChEBI" id="CHEBI:24875"/>
        <label>2</label>
    </ligand>
</feature>
<feature type="binding site" evidence="2">
    <location>
        <position position="199"/>
    </location>
    <ligand>
        <name>Fe cation</name>
        <dbReference type="ChEBI" id="CHEBI:24875"/>
        <label>1</label>
    </ligand>
</feature>
<feature type="binding site" evidence="2">
    <location>
        <position position="247"/>
    </location>
    <ligand>
        <name>Fe cation</name>
        <dbReference type="ChEBI" id="CHEBI:24875"/>
        <label>2</label>
    </ligand>
</feature>
<feature type="binding site" evidence="2">
    <location>
        <position position="302"/>
    </location>
    <ligand>
        <name>Fe cation</name>
        <dbReference type="ChEBI" id="CHEBI:24875"/>
        <label>1</label>
    </ligand>
</feature>
<feature type="binding site" evidence="2">
    <location>
        <position position="302"/>
    </location>
    <ligand>
        <name>Fe cation</name>
        <dbReference type="ChEBI" id="CHEBI:24875"/>
        <label>2</label>
    </ligand>
</feature>
<feature type="binding site" evidence="2">
    <location>
        <position position="305"/>
    </location>
    <ligand>
        <name>Fe cation</name>
        <dbReference type="ChEBI" id="CHEBI:24875"/>
        <label>2</label>
    </ligand>
</feature>
<feature type="sequence conflict" description="In Ref. 2; AAN39883." evidence="5" ref="2">
    <original>VA</original>
    <variation>GG</variation>
    <location>
        <begin position="12"/>
        <end position="13"/>
    </location>
</feature>
<feature type="sequence conflict" description="In Ref. 2; AAN39883." evidence="5" ref="2">
    <original>MH</original>
    <variation>LF</variation>
    <location>
        <begin position="198"/>
        <end position="199"/>
    </location>
</feature>
<feature type="sequence conflict" description="In Ref. 2; AAN39883." evidence="5" ref="2">
    <original>E</original>
    <variation>G</variation>
    <location>
        <position position="208"/>
    </location>
</feature>
<evidence type="ECO:0000250" key="1"/>
<evidence type="ECO:0000250" key="2">
    <source>
        <dbReference type="UniProtKB" id="Q26710"/>
    </source>
</evidence>
<evidence type="ECO:0000255" key="3"/>
<evidence type="ECO:0000256" key="4">
    <source>
        <dbReference type="SAM" id="MobiDB-lite"/>
    </source>
</evidence>
<evidence type="ECO:0000305" key="5"/>
<gene>
    <name type="primary">alxA</name>
    <name type="synonym">aod-1</name>
    <name type="ORF">AN2099</name>
</gene>
<reference key="1">
    <citation type="submission" date="2000-03" db="EMBL/GenBank/DDBJ databases">
        <title>Structure of a single copy alternative oxidase gene from Aspergillus nidulans.</title>
        <authorList>
            <person name="Sakajo S."/>
            <person name="Minagawa N."/>
            <person name="Yoshimoto A."/>
        </authorList>
    </citation>
    <scope>NUCLEOTIDE SEQUENCE [GENOMIC DNA]</scope>
    <source>
        <strain>FGSC A4 / ATCC 38163 / CBS 112.46 / NRRL 194 / M139</strain>
    </source>
</reference>
<reference key="2">
    <citation type="journal article" date="2003" name="Fungal Genet. Biol.">
        <title>Alternative oxidase expression in Neurospora crassa.</title>
        <authorList>
            <person name="Tanton L.L."/>
            <person name="Nargang C.E."/>
            <person name="Kessler K.E."/>
            <person name="Li Q."/>
            <person name="Nargang F.E."/>
        </authorList>
    </citation>
    <scope>NUCLEOTIDE SEQUENCE [GENOMIC DNA]</scope>
</reference>
<reference key="3">
    <citation type="journal article" date="2005" name="Nature">
        <title>Sequencing of Aspergillus nidulans and comparative analysis with A. fumigatus and A. oryzae.</title>
        <authorList>
            <person name="Galagan J.E."/>
            <person name="Calvo S.E."/>
            <person name="Cuomo C."/>
            <person name="Ma L.-J."/>
            <person name="Wortman J.R."/>
            <person name="Batzoglou S."/>
            <person name="Lee S.-I."/>
            <person name="Bastuerkmen M."/>
            <person name="Spevak C.C."/>
            <person name="Clutterbuck J."/>
            <person name="Kapitonov V."/>
            <person name="Jurka J."/>
            <person name="Scazzocchio C."/>
            <person name="Farman M.L."/>
            <person name="Butler J."/>
            <person name="Purcell S."/>
            <person name="Harris S."/>
            <person name="Braus G.H."/>
            <person name="Draht O."/>
            <person name="Busch S."/>
            <person name="D'Enfert C."/>
            <person name="Bouchier C."/>
            <person name="Goldman G.H."/>
            <person name="Bell-Pedersen D."/>
            <person name="Griffiths-Jones S."/>
            <person name="Doonan J.H."/>
            <person name="Yu J."/>
            <person name="Vienken K."/>
            <person name="Pain A."/>
            <person name="Freitag M."/>
            <person name="Selker E.U."/>
            <person name="Archer D.B."/>
            <person name="Penalva M.A."/>
            <person name="Oakley B.R."/>
            <person name="Momany M."/>
            <person name="Tanaka T."/>
            <person name="Kumagai T."/>
            <person name="Asai K."/>
            <person name="Machida M."/>
            <person name="Nierman W.C."/>
            <person name="Denning D.W."/>
            <person name="Caddick M.X."/>
            <person name="Hynes M."/>
            <person name="Paoletti M."/>
            <person name="Fischer R."/>
            <person name="Miller B.L."/>
            <person name="Dyer P.S."/>
            <person name="Sachs M.S."/>
            <person name="Osmani S.A."/>
            <person name="Birren B.W."/>
        </authorList>
    </citation>
    <scope>NUCLEOTIDE SEQUENCE [LARGE SCALE GENOMIC DNA]</scope>
    <source>
        <strain>FGSC A4 / ATCC 38163 / CBS 112.46 / NRRL 194 / M139</strain>
    </source>
</reference>
<reference key="4">
    <citation type="journal article" date="2009" name="Fungal Genet. Biol.">
        <title>The 2008 update of the Aspergillus nidulans genome annotation: a community effort.</title>
        <authorList>
            <person name="Wortman J.R."/>
            <person name="Gilsenan J.M."/>
            <person name="Joardar V."/>
            <person name="Deegan J."/>
            <person name="Clutterbuck J."/>
            <person name="Andersen M.R."/>
            <person name="Archer D."/>
            <person name="Bencina M."/>
            <person name="Braus G."/>
            <person name="Coutinho P."/>
            <person name="von Dohren H."/>
            <person name="Doonan J."/>
            <person name="Driessen A.J."/>
            <person name="Durek P."/>
            <person name="Espeso E."/>
            <person name="Fekete E."/>
            <person name="Flipphi M."/>
            <person name="Estrada C.G."/>
            <person name="Geysens S."/>
            <person name="Goldman G."/>
            <person name="de Groot P.W."/>
            <person name="Hansen K."/>
            <person name="Harris S.D."/>
            <person name="Heinekamp T."/>
            <person name="Helmstaedt K."/>
            <person name="Henrissat B."/>
            <person name="Hofmann G."/>
            <person name="Homan T."/>
            <person name="Horio T."/>
            <person name="Horiuchi H."/>
            <person name="James S."/>
            <person name="Jones M."/>
            <person name="Karaffa L."/>
            <person name="Karanyi Z."/>
            <person name="Kato M."/>
            <person name="Keller N."/>
            <person name="Kelly D.E."/>
            <person name="Kiel J.A."/>
            <person name="Kim J.M."/>
            <person name="van der Klei I.J."/>
            <person name="Klis F.M."/>
            <person name="Kovalchuk A."/>
            <person name="Krasevec N."/>
            <person name="Kubicek C.P."/>
            <person name="Liu B."/>
            <person name="Maccabe A."/>
            <person name="Meyer V."/>
            <person name="Mirabito P."/>
            <person name="Miskei M."/>
            <person name="Mos M."/>
            <person name="Mullins J."/>
            <person name="Nelson D.R."/>
            <person name="Nielsen J."/>
            <person name="Oakley B.R."/>
            <person name="Osmani S.A."/>
            <person name="Pakula T."/>
            <person name="Paszewski A."/>
            <person name="Paulsen I."/>
            <person name="Pilsyk S."/>
            <person name="Pocsi I."/>
            <person name="Punt P.J."/>
            <person name="Ram A.F."/>
            <person name="Ren Q."/>
            <person name="Robellet X."/>
            <person name="Robson G."/>
            <person name="Seiboth B."/>
            <person name="van Solingen P."/>
            <person name="Specht T."/>
            <person name="Sun J."/>
            <person name="Taheri-Talesh N."/>
            <person name="Takeshita N."/>
            <person name="Ussery D."/>
            <person name="vanKuyk P.A."/>
            <person name="Visser H."/>
            <person name="van de Vondervoort P.J."/>
            <person name="de Vries R.P."/>
            <person name="Walton J."/>
            <person name="Xiang X."/>
            <person name="Xiong Y."/>
            <person name="Zeng A.P."/>
            <person name="Brandt B.W."/>
            <person name="Cornell M.J."/>
            <person name="van den Hondel C.A."/>
            <person name="Visser J."/>
            <person name="Oliver S.G."/>
            <person name="Turner G."/>
        </authorList>
    </citation>
    <scope>GENOME REANNOTATION</scope>
    <source>
        <strain>FGSC A4 / ATCC 38163 / CBS 112.46 / NRRL 194 / M139</strain>
    </source>
</reference>
<organism>
    <name type="scientific">Emericella nidulans (strain FGSC A4 / ATCC 38163 / CBS 112.46 / NRRL 194 / M139)</name>
    <name type="common">Aspergillus nidulans</name>
    <dbReference type="NCBI Taxonomy" id="227321"/>
    <lineage>
        <taxon>Eukaryota</taxon>
        <taxon>Fungi</taxon>
        <taxon>Dikarya</taxon>
        <taxon>Ascomycota</taxon>
        <taxon>Pezizomycotina</taxon>
        <taxon>Eurotiomycetes</taxon>
        <taxon>Eurotiomycetidae</taxon>
        <taxon>Eurotiales</taxon>
        <taxon>Aspergillaceae</taxon>
        <taxon>Aspergillus</taxon>
        <taxon>Aspergillus subgen. Nidulantes</taxon>
    </lineage>
</organism>
<comment type="function">
    <text evidence="1">Catalyzes cyanide-resistant oxygen consumption. May increase respiration when the cytochrome respiratory pathway is restricted, or in response to low temperatures (By similarity).</text>
</comment>
<comment type="cofactor">
    <cofactor evidence="2">
        <name>Fe cation</name>
        <dbReference type="ChEBI" id="CHEBI:24875"/>
    </cofactor>
    <text evidence="2">Binds 2 iron ions per subunit.</text>
</comment>
<comment type="subcellular location">
    <subcellularLocation>
        <location evidence="1">Mitochondrion inner membrane</location>
        <topology evidence="1">Multi-pass membrane protein</topology>
        <orientation evidence="1">Matrix side</orientation>
    </subcellularLocation>
</comment>
<comment type="similarity">
    <text evidence="5">Belongs to the alternative oxidase family.</text>
</comment>
<comment type="sequence caution" evidence="5">
    <conflict type="erroneous initiation">
        <sequence resource="EMBL-CDS" id="BAA93615"/>
    </conflict>
    <text>Truncated N-terminus.</text>
</comment>
<comment type="sequence caution" evidence="5">
    <conflict type="erroneous initiation">
        <sequence resource="EMBL-CDS" id="EAA64931"/>
    </conflict>
    <text>Truncated N-terminus.</text>
</comment>
<proteinExistence type="inferred from homology"/>
<dbReference type="EC" id="1.-.-.-"/>
<dbReference type="EMBL" id="AB039832">
    <property type="protein sequence ID" value="BAA93615.1"/>
    <property type="status" value="ALT_INIT"/>
    <property type="molecule type" value="Genomic_DNA"/>
</dbReference>
<dbReference type="EMBL" id="AY140654">
    <property type="protein sequence ID" value="AAN39883.1"/>
    <property type="molecule type" value="Genomic_DNA"/>
</dbReference>
<dbReference type="EMBL" id="AACD01000032">
    <property type="protein sequence ID" value="EAA64931.1"/>
    <property type="status" value="ALT_INIT"/>
    <property type="molecule type" value="Genomic_DNA"/>
</dbReference>
<dbReference type="EMBL" id="BN001307">
    <property type="protein sequence ID" value="CBF86176.1"/>
    <property type="molecule type" value="Genomic_DNA"/>
</dbReference>
<dbReference type="RefSeq" id="XP_659703.1">
    <property type="nucleotide sequence ID" value="XM_654611.1"/>
</dbReference>
<dbReference type="SMR" id="Q9P959"/>
<dbReference type="STRING" id="227321.Q9P959"/>
<dbReference type="EnsemblFungi" id="CBF86176">
    <property type="protein sequence ID" value="CBF86176"/>
    <property type="gene ID" value="ANIA_02099"/>
</dbReference>
<dbReference type="KEGG" id="ani:ANIA_02099"/>
<dbReference type="VEuPathDB" id="FungiDB:AN2099"/>
<dbReference type="eggNOG" id="ENOG502QSB5">
    <property type="taxonomic scope" value="Eukaryota"/>
</dbReference>
<dbReference type="HOGENOM" id="CLU_041974_3_0_1"/>
<dbReference type="InParanoid" id="Q9P959"/>
<dbReference type="OMA" id="VHTYTRA"/>
<dbReference type="OrthoDB" id="16906at2759"/>
<dbReference type="Proteomes" id="UP000000560">
    <property type="component" value="Chromosome VII"/>
</dbReference>
<dbReference type="GO" id="GO:0005743">
    <property type="term" value="C:mitochondrial inner membrane"/>
    <property type="evidence" value="ECO:0007669"/>
    <property type="project" value="UniProtKB-SubCell"/>
</dbReference>
<dbReference type="GO" id="GO:0005739">
    <property type="term" value="C:mitochondrion"/>
    <property type="evidence" value="ECO:0000314"/>
    <property type="project" value="AspGD"/>
</dbReference>
<dbReference type="GO" id="GO:0009916">
    <property type="term" value="F:alternative oxidase activity"/>
    <property type="evidence" value="ECO:0000318"/>
    <property type="project" value="GO_Central"/>
</dbReference>
<dbReference type="GO" id="GO:0046872">
    <property type="term" value="F:metal ion binding"/>
    <property type="evidence" value="ECO:0007669"/>
    <property type="project" value="UniProtKB-KW"/>
</dbReference>
<dbReference type="GO" id="GO:0010230">
    <property type="term" value="P:alternative respiration"/>
    <property type="evidence" value="ECO:0000318"/>
    <property type="project" value="GO_Central"/>
</dbReference>
<dbReference type="CDD" id="cd01053">
    <property type="entry name" value="AOX"/>
    <property type="match status" value="1"/>
</dbReference>
<dbReference type="FunFam" id="1.20.1260.140:FF:000002">
    <property type="entry name" value="Alternative oxidase"/>
    <property type="match status" value="1"/>
</dbReference>
<dbReference type="Gene3D" id="1.20.1260.140">
    <property type="entry name" value="Alternative oxidase"/>
    <property type="match status" value="1"/>
</dbReference>
<dbReference type="InterPro" id="IPR002680">
    <property type="entry name" value="AOX"/>
</dbReference>
<dbReference type="InterPro" id="IPR038659">
    <property type="entry name" value="AOX_sf"/>
</dbReference>
<dbReference type="PANTHER" id="PTHR31803">
    <property type="entry name" value="ALTERNATIVE OXIDASE"/>
    <property type="match status" value="1"/>
</dbReference>
<dbReference type="PANTHER" id="PTHR31803:SF3">
    <property type="entry name" value="ALTERNATIVE OXIDASE"/>
    <property type="match status" value="1"/>
</dbReference>
<dbReference type="Pfam" id="PF01786">
    <property type="entry name" value="AOX"/>
    <property type="match status" value="1"/>
</dbReference>
<dbReference type="PIRSF" id="PIRSF005229">
    <property type="entry name" value="AOX"/>
    <property type="match status" value="1"/>
</dbReference>
<protein>
    <recommendedName>
        <fullName>Alternative oxidase, mitochondrial</fullName>
        <ecNumber>1.-.-.-</ecNumber>
    </recommendedName>
</protein>
<keyword id="KW-0249">Electron transport</keyword>
<keyword id="KW-0408">Iron</keyword>
<keyword id="KW-0472">Membrane</keyword>
<keyword id="KW-0479">Metal-binding</keyword>
<keyword id="KW-0496">Mitochondrion</keyword>
<keyword id="KW-0999">Mitochondrion inner membrane</keyword>
<keyword id="KW-0560">Oxidoreductase</keyword>
<keyword id="KW-1185">Reference proteome</keyword>
<keyword id="KW-0679">Respiratory chain</keyword>
<keyword id="KW-0809">Transit peptide</keyword>
<keyword id="KW-0812">Transmembrane</keyword>
<keyword id="KW-1133">Transmembrane helix</keyword>
<keyword id="KW-0813">Transport</keyword>